<feature type="chain" id="PRO_0000119606" description="Glutamate--tRNA ligase">
    <location>
        <begin position="1"/>
        <end position="492"/>
    </location>
</feature>
<feature type="short sequence motif" description="'HIGH' region" evidence="1">
    <location>
        <begin position="13"/>
        <end position="23"/>
    </location>
</feature>
<feature type="short sequence motif" description="'KMSKS' region" evidence="1">
    <location>
        <begin position="257"/>
        <end position="261"/>
    </location>
</feature>
<feature type="binding site" evidence="1">
    <location>
        <position position="260"/>
    </location>
    <ligand>
        <name>ATP</name>
        <dbReference type="ChEBI" id="CHEBI:30616"/>
    </ligand>
</feature>
<protein>
    <recommendedName>
        <fullName evidence="1">Glutamate--tRNA ligase</fullName>
        <ecNumber evidence="1">6.1.1.17</ecNumber>
    </recommendedName>
    <alternativeName>
        <fullName evidence="1">Glutamyl-tRNA synthetase</fullName>
        <shortName evidence="1">GluRS</shortName>
    </alternativeName>
</protein>
<comment type="function">
    <text evidence="1">Catalyzes the attachment of glutamate to tRNA(Glu) in a two-step reaction: glutamate is first activated by ATP to form Glu-AMP and then transferred to the acceptor end of tRNA(Glu).</text>
</comment>
<comment type="catalytic activity">
    <reaction evidence="1">
        <text>tRNA(Glu) + L-glutamate + ATP = L-glutamyl-tRNA(Glu) + AMP + diphosphate</text>
        <dbReference type="Rhea" id="RHEA:23540"/>
        <dbReference type="Rhea" id="RHEA-COMP:9663"/>
        <dbReference type="Rhea" id="RHEA-COMP:9680"/>
        <dbReference type="ChEBI" id="CHEBI:29985"/>
        <dbReference type="ChEBI" id="CHEBI:30616"/>
        <dbReference type="ChEBI" id="CHEBI:33019"/>
        <dbReference type="ChEBI" id="CHEBI:78442"/>
        <dbReference type="ChEBI" id="CHEBI:78520"/>
        <dbReference type="ChEBI" id="CHEBI:456215"/>
        <dbReference type="EC" id="6.1.1.17"/>
    </reaction>
</comment>
<comment type="subunit">
    <text evidence="1">Monomer.</text>
</comment>
<comment type="subcellular location">
    <subcellularLocation>
        <location evidence="1">Cytoplasm</location>
    </subcellularLocation>
</comment>
<comment type="similarity">
    <text evidence="1">Belongs to the class-I aminoacyl-tRNA synthetase family. Glutamate--tRNA ligase type 1 subfamily.</text>
</comment>
<name>SYE_MYCPA</name>
<dbReference type="EC" id="6.1.1.17" evidence="1"/>
<dbReference type="EMBL" id="AE016958">
    <property type="protein sequence ID" value="AAS05577.1"/>
    <property type="molecule type" value="Genomic_DNA"/>
</dbReference>
<dbReference type="RefSeq" id="WP_003875013.1">
    <property type="nucleotide sequence ID" value="NZ_CP106873.1"/>
</dbReference>
<dbReference type="SMR" id="Q73VI4"/>
<dbReference type="STRING" id="262316.MAP_3029c"/>
<dbReference type="KEGG" id="mpa:MAP_3029c"/>
<dbReference type="eggNOG" id="COG0008">
    <property type="taxonomic scope" value="Bacteria"/>
</dbReference>
<dbReference type="HOGENOM" id="CLU_015768_6_1_11"/>
<dbReference type="Proteomes" id="UP000000580">
    <property type="component" value="Chromosome"/>
</dbReference>
<dbReference type="GO" id="GO:0005829">
    <property type="term" value="C:cytosol"/>
    <property type="evidence" value="ECO:0007669"/>
    <property type="project" value="TreeGrafter"/>
</dbReference>
<dbReference type="GO" id="GO:0005524">
    <property type="term" value="F:ATP binding"/>
    <property type="evidence" value="ECO:0007669"/>
    <property type="project" value="UniProtKB-UniRule"/>
</dbReference>
<dbReference type="GO" id="GO:0004818">
    <property type="term" value="F:glutamate-tRNA ligase activity"/>
    <property type="evidence" value="ECO:0007669"/>
    <property type="project" value="UniProtKB-UniRule"/>
</dbReference>
<dbReference type="GO" id="GO:0000049">
    <property type="term" value="F:tRNA binding"/>
    <property type="evidence" value="ECO:0007669"/>
    <property type="project" value="InterPro"/>
</dbReference>
<dbReference type="GO" id="GO:0008270">
    <property type="term" value="F:zinc ion binding"/>
    <property type="evidence" value="ECO:0007669"/>
    <property type="project" value="InterPro"/>
</dbReference>
<dbReference type="GO" id="GO:0006424">
    <property type="term" value="P:glutamyl-tRNA aminoacylation"/>
    <property type="evidence" value="ECO:0007669"/>
    <property type="project" value="UniProtKB-UniRule"/>
</dbReference>
<dbReference type="CDD" id="cd00808">
    <property type="entry name" value="GluRS_core"/>
    <property type="match status" value="1"/>
</dbReference>
<dbReference type="FunFam" id="3.40.50.620:FF:000149">
    <property type="entry name" value="Glutamate--tRNA ligase"/>
    <property type="match status" value="1"/>
</dbReference>
<dbReference type="Gene3D" id="1.10.10.350">
    <property type="match status" value="1"/>
</dbReference>
<dbReference type="Gene3D" id="1.10.8.70">
    <property type="entry name" value="Glutamate-tRNA synthetase, class I, anticodon-binding domain 1"/>
    <property type="match status" value="1"/>
</dbReference>
<dbReference type="Gene3D" id="1.10.1160.10">
    <property type="entry name" value="Glutamyl-trna Synthetase, Domain 2"/>
    <property type="match status" value="1"/>
</dbReference>
<dbReference type="Gene3D" id="3.90.800.10">
    <property type="entry name" value="Glutamyl-tRNA Synthetase, Domain 3"/>
    <property type="match status" value="1"/>
</dbReference>
<dbReference type="Gene3D" id="3.40.50.620">
    <property type="entry name" value="HUPs"/>
    <property type="match status" value="1"/>
</dbReference>
<dbReference type="HAMAP" id="MF_00022">
    <property type="entry name" value="Glu_tRNA_synth_type1"/>
    <property type="match status" value="1"/>
</dbReference>
<dbReference type="InterPro" id="IPR045462">
    <property type="entry name" value="aa-tRNA-synth_I_cd-bd"/>
</dbReference>
<dbReference type="InterPro" id="IPR020751">
    <property type="entry name" value="aa-tRNA-synth_I_codon-bd_sub2"/>
</dbReference>
<dbReference type="InterPro" id="IPR008925">
    <property type="entry name" value="aa_tRNA-synth_I_cd-bd_sf"/>
</dbReference>
<dbReference type="InterPro" id="IPR004527">
    <property type="entry name" value="Glu-tRNA-ligase_bac/mito"/>
</dbReference>
<dbReference type="InterPro" id="IPR020752">
    <property type="entry name" value="Glu-tRNA-synth_I_codon-bd_sub1"/>
</dbReference>
<dbReference type="InterPro" id="IPR000924">
    <property type="entry name" value="Glu/Gln-tRNA-synth"/>
</dbReference>
<dbReference type="InterPro" id="IPR020058">
    <property type="entry name" value="Glu/Gln-tRNA-synth_Ib_cat-dom"/>
</dbReference>
<dbReference type="InterPro" id="IPR020061">
    <property type="entry name" value="Glu_tRNA_lig_a-bdl"/>
</dbReference>
<dbReference type="InterPro" id="IPR049940">
    <property type="entry name" value="GluQ/Sye"/>
</dbReference>
<dbReference type="InterPro" id="IPR033910">
    <property type="entry name" value="GluRS_core"/>
</dbReference>
<dbReference type="InterPro" id="IPR014729">
    <property type="entry name" value="Rossmann-like_a/b/a_fold"/>
</dbReference>
<dbReference type="NCBIfam" id="TIGR00464">
    <property type="entry name" value="gltX_bact"/>
    <property type="match status" value="1"/>
</dbReference>
<dbReference type="PANTHER" id="PTHR43311">
    <property type="entry name" value="GLUTAMATE--TRNA LIGASE"/>
    <property type="match status" value="1"/>
</dbReference>
<dbReference type="PANTHER" id="PTHR43311:SF2">
    <property type="entry name" value="GLUTAMATE--TRNA LIGASE, MITOCHONDRIAL-RELATED"/>
    <property type="match status" value="1"/>
</dbReference>
<dbReference type="Pfam" id="PF19269">
    <property type="entry name" value="Anticodon_2"/>
    <property type="match status" value="1"/>
</dbReference>
<dbReference type="Pfam" id="PF00749">
    <property type="entry name" value="tRNA-synt_1c"/>
    <property type="match status" value="1"/>
</dbReference>
<dbReference type="PRINTS" id="PR00987">
    <property type="entry name" value="TRNASYNTHGLU"/>
</dbReference>
<dbReference type="SUPFAM" id="SSF48163">
    <property type="entry name" value="An anticodon-binding domain of class I aminoacyl-tRNA synthetases"/>
    <property type="match status" value="1"/>
</dbReference>
<dbReference type="SUPFAM" id="SSF52374">
    <property type="entry name" value="Nucleotidylyl transferase"/>
    <property type="match status" value="1"/>
</dbReference>
<gene>
    <name evidence="1" type="primary">gltX</name>
    <name type="ordered locus">MAP_3029c</name>
</gene>
<accession>Q73VI4</accession>
<keyword id="KW-0030">Aminoacyl-tRNA synthetase</keyword>
<keyword id="KW-0067">ATP-binding</keyword>
<keyword id="KW-0963">Cytoplasm</keyword>
<keyword id="KW-0436">Ligase</keyword>
<keyword id="KW-0547">Nucleotide-binding</keyword>
<keyword id="KW-0648">Protein biosynthesis</keyword>
<keyword id="KW-1185">Reference proteome</keyword>
<proteinExistence type="inferred from homology"/>
<reference key="1">
    <citation type="journal article" date="2005" name="Proc. Natl. Acad. Sci. U.S.A.">
        <title>The complete genome sequence of Mycobacterium avium subspecies paratuberculosis.</title>
        <authorList>
            <person name="Li L."/>
            <person name="Bannantine J.P."/>
            <person name="Zhang Q."/>
            <person name="Amonsin A."/>
            <person name="May B.J."/>
            <person name="Alt D."/>
            <person name="Banerji N."/>
            <person name="Kanjilal S."/>
            <person name="Kapur V."/>
        </authorList>
    </citation>
    <scope>NUCLEOTIDE SEQUENCE [LARGE SCALE GENOMIC DNA]</scope>
    <source>
        <strain>ATCC BAA-968 / K-10</strain>
    </source>
</reference>
<evidence type="ECO:0000255" key="1">
    <source>
        <dbReference type="HAMAP-Rule" id="MF_00022"/>
    </source>
</evidence>
<sequence length="492" mass="54019">MTAPANVRVRFCPSPTGTPHVGMVRTALFNWAYARHTGGTFVFRIEDTDAARDSEESYLALLDALRWLGLDWDEGPEVGGPYGPYRQSQRGEIYRDVVAKLVEAGEAYYAFSTPEEVEARHIAAGRNPKLGYDNFDRHLTDSQRAAFLAEGRQPVVRLRMPDEDLGWDDLVRGSTVFAAGSVPDFALTRANGDPLYTLVNPCDDALMKITHVLRGEDLLPSTPRQLALYQALIRIGVAERIPQFAHLPTVLGEGTKKLSKRDPQSNLFAHRDRGFIPEGLLNYLALLGWAIADDRDVFSLDEMVAAFDVVDVNSNPARFDQKKADALNAEHIRMLTAADFAARLRHYLDVHGHRLALDDAAFATAAELVQTRIVVLGDAWDLLKFLNDDEYAIDPKAAAKELGPDGAAVLDAALPALDAVTDWAAPQIEAALKTALIDGLGLKPRKAFGPIRVGATGTTISPPLFESLQLLGRDRSLRRLRAARERAGQHSA</sequence>
<organism>
    <name type="scientific">Mycolicibacterium paratuberculosis (strain ATCC BAA-968 / K-10)</name>
    <name type="common">Mycobacterium paratuberculosis</name>
    <dbReference type="NCBI Taxonomy" id="262316"/>
    <lineage>
        <taxon>Bacteria</taxon>
        <taxon>Bacillati</taxon>
        <taxon>Actinomycetota</taxon>
        <taxon>Actinomycetes</taxon>
        <taxon>Mycobacteriales</taxon>
        <taxon>Mycobacteriaceae</taxon>
        <taxon>Mycobacterium</taxon>
        <taxon>Mycobacterium avium complex (MAC)</taxon>
    </lineage>
</organism>